<proteinExistence type="inferred from homology"/>
<organism>
    <name type="scientific">Xanthomonas campestris pv. campestris (strain 8004)</name>
    <dbReference type="NCBI Taxonomy" id="314565"/>
    <lineage>
        <taxon>Bacteria</taxon>
        <taxon>Pseudomonadati</taxon>
        <taxon>Pseudomonadota</taxon>
        <taxon>Gammaproteobacteria</taxon>
        <taxon>Lysobacterales</taxon>
        <taxon>Lysobacteraceae</taxon>
        <taxon>Xanthomonas</taxon>
    </lineage>
</organism>
<dbReference type="EC" id="3.6.1.-" evidence="1"/>
<dbReference type="EMBL" id="CP000050">
    <property type="protein sequence ID" value="AAY47573.1"/>
    <property type="molecule type" value="Genomic_DNA"/>
</dbReference>
<dbReference type="RefSeq" id="WP_011035729.1">
    <property type="nucleotide sequence ID" value="NZ_CP155948.1"/>
</dbReference>
<dbReference type="SMR" id="Q4UZF0"/>
<dbReference type="KEGG" id="xcb:XC_0492"/>
<dbReference type="HOGENOM" id="CLU_087195_3_1_6"/>
<dbReference type="Proteomes" id="UP000000420">
    <property type="component" value="Chromosome"/>
</dbReference>
<dbReference type="GO" id="GO:0016462">
    <property type="term" value="F:pyrophosphatase activity"/>
    <property type="evidence" value="ECO:0007669"/>
    <property type="project" value="UniProtKB-ARBA"/>
</dbReference>
<dbReference type="CDD" id="cd03671">
    <property type="entry name" value="NUDIX_Ap4A_hydrolase_plant_like"/>
    <property type="match status" value="1"/>
</dbReference>
<dbReference type="FunFam" id="3.90.79.10:FF:000001">
    <property type="entry name" value="RNA pyrophosphohydrolase"/>
    <property type="match status" value="1"/>
</dbReference>
<dbReference type="Gene3D" id="3.90.79.10">
    <property type="entry name" value="Nucleoside Triphosphate Pyrophosphohydrolase"/>
    <property type="match status" value="1"/>
</dbReference>
<dbReference type="HAMAP" id="MF_00298">
    <property type="entry name" value="Nudix_RppH"/>
    <property type="match status" value="1"/>
</dbReference>
<dbReference type="InterPro" id="IPR015797">
    <property type="entry name" value="NUDIX_hydrolase-like_dom_sf"/>
</dbReference>
<dbReference type="InterPro" id="IPR020084">
    <property type="entry name" value="NUDIX_hydrolase_CS"/>
</dbReference>
<dbReference type="InterPro" id="IPR000086">
    <property type="entry name" value="NUDIX_hydrolase_dom"/>
</dbReference>
<dbReference type="InterPro" id="IPR022927">
    <property type="entry name" value="RppH"/>
</dbReference>
<dbReference type="NCBIfam" id="NF001937">
    <property type="entry name" value="PRK00714.1-4"/>
    <property type="match status" value="1"/>
</dbReference>
<dbReference type="NCBIfam" id="NF001938">
    <property type="entry name" value="PRK00714.1-5"/>
    <property type="match status" value="1"/>
</dbReference>
<dbReference type="PANTHER" id="PTHR43736">
    <property type="entry name" value="ADP-RIBOSE PYROPHOSPHATASE"/>
    <property type="match status" value="1"/>
</dbReference>
<dbReference type="PANTHER" id="PTHR43736:SF1">
    <property type="entry name" value="DIHYDRONEOPTERIN TRIPHOSPHATE DIPHOSPHATASE"/>
    <property type="match status" value="1"/>
</dbReference>
<dbReference type="Pfam" id="PF00293">
    <property type="entry name" value="NUDIX"/>
    <property type="match status" value="1"/>
</dbReference>
<dbReference type="SUPFAM" id="SSF55811">
    <property type="entry name" value="Nudix"/>
    <property type="match status" value="1"/>
</dbReference>
<dbReference type="PROSITE" id="PS51462">
    <property type="entry name" value="NUDIX"/>
    <property type="match status" value="1"/>
</dbReference>
<dbReference type="PROSITE" id="PS00893">
    <property type="entry name" value="NUDIX_BOX"/>
    <property type="match status" value="1"/>
</dbReference>
<comment type="function">
    <text evidence="1">Accelerates the degradation of transcripts by removing pyrophosphate from the 5'-end of triphosphorylated RNA, leading to a more labile monophosphorylated state that can stimulate subsequent ribonuclease cleavage.</text>
</comment>
<comment type="cofactor">
    <cofactor evidence="1">
        <name>a divalent metal cation</name>
        <dbReference type="ChEBI" id="CHEBI:60240"/>
    </cofactor>
</comment>
<comment type="similarity">
    <text evidence="1">Belongs to the Nudix hydrolase family. RppH subfamily.</text>
</comment>
<protein>
    <recommendedName>
        <fullName evidence="1">RNA pyrophosphohydrolase</fullName>
        <ecNumber evidence="1">3.6.1.-</ecNumber>
    </recommendedName>
    <alternativeName>
        <fullName evidence="1">(Di)nucleoside polyphosphate hydrolase</fullName>
    </alternativeName>
</protein>
<name>RPPH_XANC8</name>
<gene>
    <name evidence="1" type="primary">rppH</name>
    <name evidence="1" type="synonym">nudH</name>
    <name type="ordered locus">XC_0492</name>
</gene>
<reference key="1">
    <citation type="journal article" date="2005" name="Genome Res.">
        <title>Comparative and functional genomic analyses of the pathogenicity of phytopathogen Xanthomonas campestris pv. campestris.</title>
        <authorList>
            <person name="Qian W."/>
            <person name="Jia Y."/>
            <person name="Ren S.-X."/>
            <person name="He Y.-Q."/>
            <person name="Feng J.-X."/>
            <person name="Lu L.-F."/>
            <person name="Sun Q."/>
            <person name="Ying G."/>
            <person name="Tang D.-J."/>
            <person name="Tang H."/>
            <person name="Wu W."/>
            <person name="Hao P."/>
            <person name="Wang L."/>
            <person name="Jiang B.-L."/>
            <person name="Zeng S."/>
            <person name="Gu W.-Y."/>
            <person name="Lu G."/>
            <person name="Rong L."/>
            <person name="Tian Y."/>
            <person name="Yao Z."/>
            <person name="Fu G."/>
            <person name="Chen B."/>
            <person name="Fang R."/>
            <person name="Qiang B."/>
            <person name="Chen Z."/>
            <person name="Zhao G.-P."/>
            <person name="Tang J.-L."/>
            <person name="He C."/>
        </authorList>
    </citation>
    <scope>NUCLEOTIDE SEQUENCE [LARGE SCALE GENOMIC DNA]</scope>
    <source>
        <strain>8004</strain>
    </source>
</reference>
<keyword id="KW-0378">Hydrolase</keyword>
<evidence type="ECO:0000255" key="1">
    <source>
        <dbReference type="HAMAP-Rule" id="MF_00298"/>
    </source>
</evidence>
<evidence type="ECO:0000256" key="2">
    <source>
        <dbReference type="SAM" id="MobiDB-lite"/>
    </source>
</evidence>
<accession>Q4UZF0</accession>
<feature type="chain" id="PRO_0000231944" description="RNA pyrophosphohydrolase">
    <location>
        <begin position="1"/>
        <end position="205"/>
    </location>
</feature>
<feature type="domain" description="Nudix hydrolase" evidence="1">
    <location>
        <begin position="6"/>
        <end position="149"/>
    </location>
</feature>
<feature type="region of interest" description="Disordered" evidence="2">
    <location>
        <begin position="178"/>
        <end position="205"/>
    </location>
</feature>
<feature type="short sequence motif" description="Nudix box">
    <location>
        <begin position="38"/>
        <end position="59"/>
    </location>
</feature>
<feature type="compositionally biased region" description="Basic residues" evidence="2">
    <location>
        <begin position="186"/>
        <end position="195"/>
    </location>
</feature>
<sequence>MIDPDGFRPNVGIVLMREDGQVFWARRVRRDGWQFPQGGMNTDETPVEAMYRELREETGLLPEHVELLGATPGWLRYRLPSRAVRRNERQVCIGQKQVWFLLQFTGQESHLKLDHTDSPEFDHWRWVDFWYPVEHVVMFKRGVYARALRHLAPLAQTVAGPAAVGVMPQRALEAWLPGSSAAGHDRPRKRPRKRGGVLPVRINND</sequence>